<sequence>MKQRGVTIWLTGLSGAGKSTITEALAQKLREQDYPLEVLDGDVVRTNLTKGLGFSKEDRDENIRRIGFVCNLLTRHGVFVLVSAISPYREIREEVRGKIGDFVEVFVNAPLAVCEQRDVKGLYKRARAGEIKSFTGIDDPYEPPLNPEVECRTDLEELDESVNKILHKLDQLGYLR</sequence>
<comment type="function">
    <text evidence="1">Catalyzes the synthesis of activated sulfate.</text>
</comment>
<comment type="catalytic activity">
    <reaction evidence="1">
        <text>adenosine 5'-phosphosulfate + ATP = 3'-phosphoadenylyl sulfate + ADP + H(+)</text>
        <dbReference type="Rhea" id="RHEA:24152"/>
        <dbReference type="ChEBI" id="CHEBI:15378"/>
        <dbReference type="ChEBI" id="CHEBI:30616"/>
        <dbReference type="ChEBI" id="CHEBI:58243"/>
        <dbReference type="ChEBI" id="CHEBI:58339"/>
        <dbReference type="ChEBI" id="CHEBI:456216"/>
        <dbReference type="EC" id="2.7.1.25"/>
    </reaction>
</comment>
<comment type="pathway">
    <text evidence="1">Sulfur metabolism; hydrogen sulfide biosynthesis; sulfite from sulfate: step 2/3.</text>
</comment>
<comment type="similarity">
    <text evidence="1">Belongs to the APS kinase family.</text>
</comment>
<dbReference type="EC" id="2.7.1.25" evidence="1"/>
<dbReference type="EMBL" id="CP001291">
    <property type="protein sequence ID" value="ACK71233.1"/>
    <property type="molecule type" value="Genomic_DNA"/>
</dbReference>
<dbReference type="SMR" id="B7K8N5"/>
<dbReference type="STRING" id="65393.PCC7424_2826"/>
<dbReference type="KEGG" id="cyc:PCC7424_2826"/>
<dbReference type="eggNOG" id="COG0529">
    <property type="taxonomic scope" value="Bacteria"/>
</dbReference>
<dbReference type="HOGENOM" id="CLU_046932_2_1_3"/>
<dbReference type="OrthoDB" id="9804504at2"/>
<dbReference type="UniPathway" id="UPA00140">
    <property type="reaction ID" value="UER00205"/>
</dbReference>
<dbReference type="Proteomes" id="UP000002384">
    <property type="component" value="Chromosome"/>
</dbReference>
<dbReference type="GO" id="GO:0005737">
    <property type="term" value="C:cytoplasm"/>
    <property type="evidence" value="ECO:0007669"/>
    <property type="project" value="TreeGrafter"/>
</dbReference>
<dbReference type="GO" id="GO:0004020">
    <property type="term" value="F:adenylylsulfate kinase activity"/>
    <property type="evidence" value="ECO:0007669"/>
    <property type="project" value="UniProtKB-UniRule"/>
</dbReference>
<dbReference type="GO" id="GO:0005524">
    <property type="term" value="F:ATP binding"/>
    <property type="evidence" value="ECO:0007669"/>
    <property type="project" value="UniProtKB-UniRule"/>
</dbReference>
<dbReference type="GO" id="GO:0004781">
    <property type="term" value="F:sulfate adenylyltransferase (ATP) activity"/>
    <property type="evidence" value="ECO:0007669"/>
    <property type="project" value="TreeGrafter"/>
</dbReference>
<dbReference type="GO" id="GO:0070814">
    <property type="term" value="P:hydrogen sulfide biosynthetic process"/>
    <property type="evidence" value="ECO:0007669"/>
    <property type="project" value="UniProtKB-UniRule"/>
</dbReference>
<dbReference type="GO" id="GO:0010134">
    <property type="term" value="P:sulfate assimilation via adenylyl sulfate reduction"/>
    <property type="evidence" value="ECO:0007669"/>
    <property type="project" value="TreeGrafter"/>
</dbReference>
<dbReference type="GO" id="GO:0019379">
    <property type="term" value="P:sulfate assimilation, phosphoadenylyl sulfate reduction by phosphoadenylyl-sulfate reductase (thioredoxin)"/>
    <property type="evidence" value="ECO:0007669"/>
    <property type="project" value="TreeGrafter"/>
</dbReference>
<dbReference type="CDD" id="cd02027">
    <property type="entry name" value="APSK"/>
    <property type="match status" value="1"/>
</dbReference>
<dbReference type="FunFam" id="3.40.50.300:FF:000802">
    <property type="entry name" value="Sulfate adenylyltransferase"/>
    <property type="match status" value="1"/>
</dbReference>
<dbReference type="Gene3D" id="3.40.50.300">
    <property type="entry name" value="P-loop containing nucleotide triphosphate hydrolases"/>
    <property type="match status" value="1"/>
</dbReference>
<dbReference type="HAMAP" id="MF_00065">
    <property type="entry name" value="Adenylyl_sulf_kinase"/>
    <property type="match status" value="1"/>
</dbReference>
<dbReference type="InterPro" id="IPR002891">
    <property type="entry name" value="APS_kinase"/>
</dbReference>
<dbReference type="InterPro" id="IPR027417">
    <property type="entry name" value="P-loop_NTPase"/>
</dbReference>
<dbReference type="InterPro" id="IPR050512">
    <property type="entry name" value="Sulf_AdTrans/APS_kinase"/>
</dbReference>
<dbReference type="NCBIfam" id="TIGR00455">
    <property type="entry name" value="apsK"/>
    <property type="match status" value="1"/>
</dbReference>
<dbReference type="NCBIfam" id="NF002059">
    <property type="entry name" value="PRK00889.1"/>
    <property type="match status" value="1"/>
</dbReference>
<dbReference type="NCBIfam" id="NF003013">
    <property type="entry name" value="PRK03846.1"/>
    <property type="match status" value="1"/>
</dbReference>
<dbReference type="PANTHER" id="PTHR42700">
    <property type="entry name" value="SULFATE ADENYLYLTRANSFERASE"/>
    <property type="match status" value="1"/>
</dbReference>
<dbReference type="PANTHER" id="PTHR42700:SF1">
    <property type="entry name" value="SULFATE ADENYLYLTRANSFERASE"/>
    <property type="match status" value="1"/>
</dbReference>
<dbReference type="Pfam" id="PF01583">
    <property type="entry name" value="APS_kinase"/>
    <property type="match status" value="1"/>
</dbReference>
<dbReference type="SUPFAM" id="SSF52540">
    <property type="entry name" value="P-loop containing nucleoside triphosphate hydrolases"/>
    <property type="match status" value="1"/>
</dbReference>
<name>CYSC_GLOC7</name>
<protein>
    <recommendedName>
        <fullName evidence="1">Adenylyl-sulfate kinase</fullName>
        <ecNumber evidence="1">2.7.1.25</ecNumber>
    </recommendedName>
    <alternativeName>
        <fullName evidence="1">APS kinase</fullName>
    </alternativeName>
    <alternativeName>
        <fullName evidence="1">ATP adenosine-5'-phosphosulfate 3'-phosphotransferase</fullName>
    </alternativeName>
    <alternativeName>
        <fullName evidence="1">Adenosine-5'-phosphosulfate kinase</fullName>
    </alternativeName>
</protein>
<reference key="1">
    <citation type="journal article" date="2011" name="MBio">
        <title>Novel metabolic attributes of the genus Cyanothece, comprising a group of unicellular nitrogen-fixing Cyanobacteria.</title>
        <authorList>
            <person name="Bandyopadhyay A."/>
            <person name="Elvitigala T."/>
            <person name="Welsh E."/>
            <person name="Stockel J."/>
            <person name="Liberton M."/>
            <person name="Min H."/>
            <person name="Sherman L.A."/>
            <person name="Pakrasi H.B."/>
        </authorList>
    </citation>
    <scope>NUCLEOTIDE SEQUENCE [LARGE SCALE GENOMIC DNA]</scope>
    <source>
        <strain>PCC 7424</strain>
    </source>
</reference>
<gene>
    <name evidence="1" type="primary">cysC</name>
    <name type="ordered locus">PCC7424_2826</name>
</gene>
<accession>B7K8N5</accession>
<organism>
    <name type="scientific">Gloeothece citriformis (strain PCC 7424)</name>
    <name type="common">Cyanothece sp. (strain PCC 7424)</name>
    <dbReference type="NCBI Taxonomy" id="65393"/>
    <lineage>
        <taxon>Bacteria</taxon>
        <taxon>Bacillati</taxon>
        <taxon>Cyanobacteriota</taxon>
        <taxon>Cyanophyceae</taxon>
        <taxon>Oscillatoriophycideae</taxon>
        <taxon>Chroococcales</taxon>
        <taxon>Aphanothecaceae</taxon>
        <taxon>Gloeothece</taxon>
        <taxon>Gloeothece citriformis</taxon>
    </lineage>
</organism>
<keyword id="KW-0067">ATP-binding</keyword>
<keyword id="KW-0418">Kinase</keyword>
<keyword id="KW-0547">Nucleotide-binding</keyword>
<keyword id="KW-0597">Phosphoprotein</keyword>
<keyword id="KW-1185">Reference proteome</keyword>
<keyword id="KW-0808">Transferase</keyword>
<proteinExistence type="inferred from homology"/>
<evidence type="ECO:0000255" key="1">
    <source>
        <dbReference type="HAMAP-Rule" id="MF_00065"/>
    </source>
</evidence>
<feature type="chain" id="PRO_1000116964" description="Adenylyl-sulfate kinase">
    <location>
        <begin position="1"/>
        <end position="176"/>
    </location>
</feature>
<feature type="active site" description="Phosphoserine intermediate" evidence="1">
    <location>
        <position position="86"/>
    </location>
</feature>
<feature type="binding site" evidence="1">
    <location>
        <begin position="12"/>
        <end position="19"/>
    </location>
    <ligand>
        <name>ATP</name>
        <dbReference type="ChEBI" id="CHEBI:30616"/>
    </ligand>
</feature>